<dbReference type="EC" id="2.1.3.15" evidence="1"/>
<dbReference type="EMBL" id="CP000947">
    <property type="protein sequence ID" value="ACA31153.1"/>
    <property type="molecule type" value="Genomic_DNA"/>
</dbReference>
<dbReference type="RefSeq" id="WP_012340559.1">
    <property type="nucleotide sequence ID" value="NC_010519.1"/>
</dbReference>
<dbReference type="SMR" id="B0UUD1"/>
<dbReference type="STRING" id="228400.HSM_1410"/>
<dbReference type="GeneID" id="31487708"/>
<dbReference type="KEGG" id="hsm:HSM_1410"/>
<dbReference type="HOGENOM" id="CLU_015486_0_2_6"/>
<dbReference type="UniPathway" id="UPA00655">
    <property type="reaction ID" value="UER00711"/>
</dbReference>
<dbReference type="GO" id="GO:0009317">
    <property type="term" value="C:acetyl-CoA carboxylase complex"/>
    <property type="evidence" value="ECO:0007669"/>
    <property type="project" value="InterPro"/>
</dbReference>
<dbReference type="GO" id="GO:0003989">
    <property type="term" value="F:acetyl-CoA carboxylase activity"/>
    <property type="evidence" value="ECO:0007669"/>
    <property type="project" value="InterPro"/>
</dbReference>
<dbReference type="GO" id="GO:0005524">
    <property type="term" value="F:ATP binding"/>
    <property type="evidence" value="ECO:0007669"/>
    <property type="project" value="UniProtKB-KW"/>
</dbReference>
<dbReference type="GO" id="GO:0016743">
    <property type="term" value="F:carboxyl- or carbamoyltransferase activity"/>
    <property type="evidence" value="ECO:0007669"/>
    <property type="project" value="UniProtKB-UniRule"/>
</dbReference>
<dbReference type="GO" id="GO:0006633">
    <property type="term" value="P:fatty acid biosynthetic process"/>
    <property type="evidence" value="ECO:0007669"/>
    <property type="project" value="UniProtKB-KW"/>
</dbReference>
<dbReference type="GO" id="GO:2001295">
    <property type="term" value="P:malonyl-CoA biosynthetic process"/>
    <property type="evidence" value="ECO:0007669"/>
    <property type="project" value="UniProtKB-UniRule"/>
</dbReference>
<dbReference type="FunFam" id="3.90.226.10:FF:000008">
    <property type="entry name" value="Acetyl-coenzyme A carboxylase carboxyl transferase subunit alpha"/>
    <property type="match status" value="1"/>
</dbReference>
<dbReference type="Gene3D" id="3.90.226.10">
    <property type="entry name" value="2-enoyl-CoA Hydratase, Chain A, domain 1"/>
    <property type="match status" value="1"/>
</dbReference>
<dbReference type="HAMAP" id="MF_00823">
    <property type="entry name" value="AcetylCoA_CT_alpha"/>
    <property type="match status" value="1"/>
</dbReference>
<dbReference type="InterPro" id="IPR001095">
    <property type="entry name" value="Acetyl_CoA_COase_a_su"/>
</dbReference>
<dbReference type="InterPro" id="IPR029045">
    <property type="entry name" value="ClpP/crotonase-like_dom_sf"/>
</dbReference>
<dbReference type="InterPro" id="IPR011763">
    <property type="entry name" value="COA_CT_C"/>
</dbReference>
<dbReference type="NCBIfam" id="TIGR00513">
    <property type="entry name" value="accA"/>
    <property type="match status" value="1"/>
</dbReference>
<dbReference type="NCBIfam" id="NF041504">
    <property type="entry name" value="AccA_sub"/>
    <property type="match status" value="1"/>
</dbReference>
<dbReference type="NCBIfam" id="NF004344">
    <property type="entry name" value="PRK05724.1"/>
    <property type="match status" value="1"/>
</dbReference>
<dbReference type="PANTHER" id="PTHR42853">
    <property type="entry name" value="ACETYL-COENZYME A CARBOXYLASE CARBOXYL TRANSFERASE SUBUNIT ALPHA"/>
    <property type="match status" value="1"/>
</dbReference>
<dbReference type="PANTHER" id="PTHR42853:SF3">
    <property type="entry name" value="ACETYL-COENZYME A CARBOXYLASE CARBOXYL TRANSFERASE SUBUNIT ALPHA, CHLOROPLASTIC"/>
    <property type="match status" value="1"/>
</dbReference>
<dbReference type="Pfam" id="PF03255">
    <property type="entry name" value="ACCA"/>
    <property type="match status" value="1"/>
</dbReference>
<dbReference type="PRINTS" id="PR01069">
    <property type="entry name" value="ACCCTRFRASEA"/>
</dbReference>
<dbReference type="SUPFAM" id="SSF52096">
    <property type="entry name" value="ClpP/crotonase"/>
    <property type="match status" value="1"/>
</dbReference>
<dbReference type="PROSITE" id="PS50989">
    <property type="entry name" value="COA_CT_CTER"/>
    <property type="match status" value="1"/>
</dbReference>
<keyword id="KW-0067">ATP-binding</keyword>
<keyword id="KW-0963">Cytoplasm</keyword>
<keyword id="KW-0275">Fatty acid biosynthesis</keyword>
<keyword id="KW-0276">Fatty acid metabolism</keyword>
<keyword id="KW-0444">Lipid biosynthesis</keyword>
<keyword id="KW-0443">Lipid metabolism</keyword>
<keyword id="KW-0547">Nucleotide-binding</keyword>
<keyword id="KW-0808">Transferase</keyword>
<protein>
    <recommendedName>
        <fullName evidence="1">Acetyl-coenzyme A carboxylase carboxyl transferase subunit alpha</fullName>
        <shortName evidence="1">ACCase subunit alpha</shortName>
        <shortName evidence="1">Acetyl-CoA carboxylase carboxyltransferase subunit alpha</shortName>
        <ecNumber evidence="1">2.1.3.15</ecNumber>
    </recommendedName>
</protein>
<sequence>MSQEFLDFELPIAELEAKIEALRSVSQQDQQINLDDEITRLQKKSAELTQKTFANLDAWQVSQMARHPNRPYTLDYIEHIFTDFQTLAGDRAFADDQAIVGGLARLEERPVMIIGHQKGRSIKEKVKRNFGMPAPEGYRKALRLMQMAERFNLPIITFIDTPGAYPGVGAEERGQSEAIARNLREMSMLKVPIICTVIGEGGSGGALAIGVGDKINMLQYSTYSVISPEGCASILWKSAAKASTAAEVMGLTASRLHELKLIDSIIEEPLGGAHRNYDTMSNNLKKRLLADLADLDKLDQETLLDRRYKRLMSYGYC</sequence>
<comment type="function">
    <text evidence="1">Component of the acetyl coenzyme A carboxylase (ACC) complex. First, biotin carboxylase catalyzes the carboxylation of biotin on its carrier protein (BCCP) and then the CO(2) group is transferred by the carboxyltransferase to acetyl-CoA to form malonyl-CoA.</text>
</comment>
<comment type="catalytic activity">
    <reaction evidence="1">
        <text>N(6)-carboxybiotinyl-L-lysyl-[protein] + acetyl-CoA = N(6)-biotinyl-L-lysyl-[protein] + malonyl-CoA</text>
        <dbReference type="Rhea" id="RHEA:54728"/>
        <dbReference type="Rhea" id="RHEA-COMP:10505"/>
        <dbReference type="Rhea" id="RHEA-COMP:10506"/>
        <dbReference type="ChEBI" id="CHEBI:57288"/>
        <dbReference type="ChEBI" id="CHEBI:57384"/>
        <dbReference type="ChEBI" id="CHEBI:83144"/>
        <dbReference type="ChEBI" id="CHEBI:83145"/>
        <dbReference type="EC" id="2.1.3.15"/>
    </reaction>
</comment>
<comment type="pathway">
    <text evidence="1">Lipid metabolism; malonyl-CoA biosynthesis; malonyl-CoA from acetyl-CoA: step 1/1.</text>
</comment>
<comment type="subunit">
    <text evidence="1">Acetyl-CoA carboxylase is a heterohexamer composed of biotin carboxyl carrier protein (AccB), biotin carboxylase (AccC) and two subunits each of ACCase subunit alpha (AccA) and ACCase subunit beta (AccD).</text>
</comment>
<comment type="subcellular location">
    <subcellularLocation>
        <location evidence="1">Cytoplasm</location>
    </subcellularLocation>
</comment>
<comment type="similarity">
    <text evidence="1">Belongs to the AccA family.</text>
</comment>
<feature type="chain" id="PRO_1000083929" description="Acetyl-coenzyme A carboxylase carboxyl transferase subunit alpha">
    <location>
        <begin position="1"/>
        <end position="317"/>
    </location>
</feature>
<feature type="domain" description="CoA carboxyltransferase C-terminal" evidence="2">
    <location>
        <begin position="33"/>
        <end position="294"/>
    </location>
</feature>
<proteinExistence type="inferred from homology"/>
<gene>
    <name evidence="1" type="primary">accA</name>
    <name type="ordered locus">HSM_1410</name>
</gene>
<accession>B0UUD1</accession>
<evidence type="ECO:0000255" key="1">
    <source>
        <dbReference type="HAMAP-Rule" id="MF_00823"/>
    </source>
</evidence>
<evidence type="ECO:0000255" key="2">
    <source>
        <dbReference type="PROSITE-ProRule" id="PRU01137"/>
    </source>
</evidence>
<organism>
    <name type="scientific">Histophilus somni (strain 2336)</name>
    <name type="common">Haemophilus somnus</name>
    <dbReference type="NCBI Taxonomy" id="228400"/>
    <lineage>
        <taxon>Bacteria</taxon>
        <taxon>Pseudomonadati</taxon>
        <taxon>Pseudomonadota</taxon>
        <taxon>Gammaproteobacteria</taxon>
        <taxon>Pasteurellales</taxon>
        <taxon>Pasteurellaceae</taxon>
        <taxon>Histophilus</taxon>
    </lineage>
</organism>
<name>ACCA_HISS2</name>
<reference key="1">
    <citation type="submission" date="2008-02" db="EMBL/GenBank/DDBJ databases">
        <title>Complete sequence of Haemophilus somnus 2336.</title>
        <authorList>
            <consortium name="US DOE Joint Genome Institute"/>
            <person name="Siddaramappa S."/>
            <person name="Duncan A.J."/>
            <person name="Challacombe J.F."/>
            <person name="Rainey D."/>
            <person name="Gillaspy A.F."/>
            <person name="Carson M."/>
            <person name="Gipson J."/>
            <person name="Gipson M."/>
            <person name="Bruce D."/>
            <person name="Detter J.C."/>
            <person name="Han C.S."/>
            <person name="Land M."/>
            <person name="Tapia R."/>
            <person name="Thompson L.S."/>
            <person name="Orvis J."/>
            <person name="Zaitshik J."/>
            <person name="Barnes G."/>
            <person name="Brettin T.S."/>
            <person name="Dyer D.W."/>
            <person name="Inzana T.J."/>
        </authorList>
    </citation>
    <scope>NUCLEOTIDE SEQUENCE [LARGE SCALE GENOMIC DNA]</scope>
    <source>
        <strain>2336</strain>
    </source>
</reference>